<sequence>MEGKRQLEKRDFGKRLSLDSSLVEYMDSNKYIEHLLTQLEEQHRSLWREKLAVARLQREVAQRTSEGAMHEKLIHELEEERHLRLQSEKRLQEVTLESERNRIQMRSLQQQFSRMEETVRNLLQSQGSPEQKKEETVNIMVYQEKLSEEERKHKEALEDLHMVVDEDSRSESSSTDEGKEKTKLLLERLKALEAENSALALENENQREQYERCLDEVANQVVQALLTQKDLREECVKLKTRVFDLEQQNRTLSILFQQRVRPTSDLLLQKLHSRLLDLSSGDLLSEVERNRSLTQSRTDAEVHEHQLNTKSALKCPGLGAVIPGHLCPRNSYSSSSELSLSSTCSEYSSGSSYTWHDGKNLRKRQSSQNWDKRLSIDSSLPSGFASPTNELPPTRIKESHILEGLRKLQKRKVLLEPPSVITKWGYKDCMNSNEGIYSPGIKSSSLKEYPPCKTADLGSPCKEPHKTFVYDLDSHVDADDDPSTLALLQAVPNQSCRPHGSKLTHSVSDSLFGWETNRKHFLEGTSSVYPKERPEKLTSCASSCPLEMKLCPSVQTPQVQRERGPQGQGHGRMALNLQLSDTDDNETFDELHIESSDEKSPSDVSLAADTDKSVENLDVLVGFGKSLCGSPEEEEKQVPIPSETRPKTFSFIKQQRVVKRTSSEECVTVIFDAEDGEPIEFSSHQTGVVTVTRNEISINSTPAGPKAEHTELLPQGIACLQPRAAARDYTFFKRSEEDTEKNIPKDNVDNVPRVSTESFSSRTVTQNPQQQKLVKPTHNISCQSNSRSSAPMGIYQKQNLTKIPPRGKSSPQKSKLMEPEATTLLPSSGLVTLEKSPALAPGKLSRFMKTESSGPLFELRSDPHIPKHSAQLPHSSRMPSRRDWVQCPKSQTPGSRSRPAIESSDSGEPPTRDEHCGSGPEAGVKSPSPPPPPGRSVSLLARPSYDYSPAPSSTKSETRVPSETARTPFKSPLLKGISAPVISSNPATTEVQRKKPSVAFKKPIFTHPMPSPEAVIQTRCPAHAPSSSFTVMALGPPKVSPKRGVPKTSPRQTLGTPQRDIGLQTPRISPSTHEPLEMTSSKSVSPGRKGQLNDSASTPPKPSFLGVNESPSSQVSSSSSSSSPAKSHNSPHGCQSAHEKGLKTRLPVGLKVLMKSPQLLRKSSTVPGKHEKDSLNEASKSSVAVNKSKPEDSKNPASMEITAGERNVTLPDSQAQGSLADGLPLETALQEPLESSIPGSDGRDGVDNRSMRRSLSSSKPHLKPALGMNGAKARSHSFSTHSGDKPSTPPIEGSGKVRTQIITNTAERGNSLTRQNSSTESSPNKAPSAPMLESLPSVGRPSGHPSSGKGSLGSSGSFSSQHGSPSKLPLRIPPKSEGLLIPPGKEDQQAFTQGECPSANVAVLGEPGSDRRSCPPTPTDCPEALQSPGRTQHPSTFETSSTSKLETSGRHPDASATATDAVSSEAPLSPTIEEKVMLCIQENVEKGQVQTKPTSVEAKQKPGPSFASWFGFRKSRLPALSSRKMDISKTKVEKKDAKVLGFGNRQLKSERKKEKKKPELQCETENELIKDTKSADNPDGGLQSKNNRRTPQDIYNQLKIEPRNRHSPVACSTKDTFMTELLNRVDKKAAPQTESGSSNASCRNVLKGSSQGSCLIGSSISTQGNHKKNMKIKADMEVPKDSLVKEANENLQEDEDDAVADSVFQSHIIESNCQMRTLDSGIGTFPLPDSGNRSTGRYLCQPDSPEDAEPLLPLQSALSAVSSMRAQTLEREVPSSTDGQRPADSAIVHSTSDPIMTARGMRPLQSRLPKPASSGKVSSQKQNEAEPRPQTCSSFGYAEDPMASQPLPDWGSEVAATGTQDKAPRMCTYSASGGSNSDSDLDYGDNGFGAGRGQLVKALKSAAPEIETT</sequence>
<dbReference type="EMBL" id="AK057980">
    <property type="status" value="NOT_ANNOTATED_CDS"/>
    <property type="molecule type" value="mRNA"/>
</dbReference>
<dbReference type="EMBL" id="AK092189">
    <property type="protein sequence ID" value="BAC03824.1"/>
    <property type="molecule type" value="mRNA"/>
</dbReference>
<dbReference type="EMBL" id="AK124659">
    <property type="protein sequence ID" value="BAC85920.1"/>
    <property type="status" value="ALT_INIT"/>
    <property type="molecule type" value="mRNA"/>
</dbReference>
<dbReference type="EMBL" id="AC010890">
    <property type="status" value="NOT_ANNOTATED_CDS"/>
    <property type="molecule type" value="Genomic_DNA"/>
</dbReference>
<dbReference type="EMBL" id="AC010974">
    <property type="status" value="NOT_ANNOTATED_CDS"/>
    <property type="molecule type" value="Genomic_DNA"/>
</dbReference>
<dbReference type="EMBL" id="AC011243">
    <property type="status" value="NOT_ANNOTATED_CDS"/>
    <property type="molecule type" value="Genomic_DNA"/>
</dbReference>
<dbReference type="EMBL" id="AC011755">
    <property type="status" value="NOT_ANNOTATED_CDS"/>
    <property type="molecule type" value="Genomic_DNA"/>
</dbReference>
<dbReference type="EMBL" id="AC011996">
    <property type="status" value="NOT_ANNOTATED_CDS"/>
    <property type="molecule type" value="Genomic_DNA"/>
</dbReference>
<dbReference type="EMBL" id="AC012489">
    <property type="status" value="NOT_ANNOTATED_CDS"/>
    <property type="molecule type" value="Genomic_DNA"/>
</dbReference>
<dbReference type="EMBL" id="AC016909">
    <property type="status" value="NOT_ANNOTATED_CDS"/>
    <property type="molecule type" value="Genomic_DNA"/>
</dbReference>
<dbReference type="EMBL" id="BC110831">
    <property type="protein sequence ID" value="AAI10832.1"/>
    <property type="molecule type" value="mRNA"/>
</dbReference>
<dbReference type="EMBL" id="AY946007">
    <property type="protein sequence ID" value="AAY23346.1"/>
    <property type="molecule type" value="mRNA"/>
</dbReference>
<dbReference type="EMBL" id="AY946008">
    <property type="protein sequence ID" value="AAY23347.1"/>
    <property type="molecule type" value="mRNA"/>
</dbReference>
<dbReference type="EMBL" id="AB005217">
    <property type="protein sequence ID" value="BAA22433.1"/>
    <property type="status" value="ALT_FRAME"/>
    <property type="molecule type" value="mRNA"/>
</dbReference>
<dbReference type="CCDS" id="CCDS46417.1">
    <molecule id="O14513-2"/>
</dbReference>
<dbReference type="CCDS" id="CCDS46418.1">
    <molecule id="O14513-1"/>
</dbReference>
<dbReference type="RefSeq" id="NP_997246.2">
    <molecule id="O14513-1"/>
    <property type="nucleotide sequence ID" value="NM_207363.3"/>
</dbReference>
<dbReference type="RefSeq" id="NP_997364.3">
    <molecule id="O14513-2"/>
    <property type="nucleotide sequence ID" value="NM_207481.4"/>
</dbReference>
<dbReference type="RefSeq" id="XP_016859469.1">
    <property type="nucleotide sequence ID" value="XM_017003980.1"/>
</dbReference>
<dbReference type="RefSeq" id="XP_047300085.1">
    <molecule id="O14513-1"/>
    <property type="nucleotide sequence ID" value="XM_047444129.1"/>
</dbReference>
<dbReference type="RefSeq" id="XP_047300089.1">
    <molecule id="O14513-2"/>
    <property type="nucleotide sequence ID" value="XM_047444133.1"/>
</dbReference>
<dbReference type="RefSeq" id="XP_047300090.1">
    <molecule id="O14513-2"/>
    <property type="nucleotide sequence ID" value="XM_047444134.1"/>
</dbReference>
<dbReference type="RefSeq" id="XP_054197732.1">
    <molecule id="O14513-2"/>
    <property type="nucleotide sequence ID" value="XM_054341757.1"/>
</dbReference>
<dbReference type="RefSeq" id="XP_054197733.1">
    <molecule id="O14513-2"/>
    <property type="nucleotide sequence ID" value="XM_054341758.1"/>
</dbReference>
<dbReference type="SMR" id="O14513"/>
<dbReference type="BioGRID" id="131288">
    <property type="interactions" value="31"/>
</dbReference>
<dbReference type="FunCoup" id="O14513">
    <property type="interactions" value="50"/>
</dbReference>
<dbReference type="IntAct" id="O14513">
    <property type="interactions" value="33"/>
</dbReference>
<dbReference type="MINT" id="O14513"/>
<dbReference type="STRING" id="9606.ENSP00000387128"/>
<dbReference type="GlyConnect" id="758">
    <property type="glycosylation" value="1 N-Linked glycan (1 site)"/>
</dbReference>
<dbReference type="GlyCosmos" id="O14513">
    <property type="glycosylation" value="2 sites, 4 glycans"/>
</dbReference>
<dbReference type="GlyGen" id="O14513">
    <property type="glycosylation" value="8 sites, 2 N-linked glycans (1 site), 2 O-linked glycans (5 sites)"/>
</dbReference>
<dbReference type="iPTMnet" id="O14513"/>
<dbReference type="PhosphoSitePlus" id="O14513"/>
<dbReference type="BioMuta" id="NCKAP5"/>
<dbReference type="jPOST" id="O14513"/>
<dbReference type="MassIVE" id="O14513"/>
<dbReference type="PaxDb" id="9606-ENSP00000387128"/>
<dbReference type="PeptideAtlas" id="O14513"/>
<dbReference type="ProteomicsDB" id="48057">
    <molecule id="O14513-1"/>
</dbReference>
<dbReference type="ProteomicsDB" id="48058">
    <molecule id="O14513-2"/>
</dbReference>
<dbReference type="ProteomicsDB" id="48059">
    <molecule id="O14513-3"/>
</dbReference>
<dbReference type="Antibodypedia" id="50647">
    <property type="antibodies" value="38 antibodies from 11 providers"/>
</dbReference>
<dbReference type="DNASU" id="344148"/>
<dbReference type="Ensembl" id="ENST00000409213.5">
    <molecule id="O14513-2"/>
    <property type="protein sequence ID" value="ENSP00000386952.1"/>
    <property type="gene ID" value="ENSG00000176771.18"/>
</dbReference>
<dbReference type="Ensembl" id="ENST00000409261.6">
    <molecule id="O14513-1"/>
    <property type="protein sequence ID" value="ENSP00000387128.1"/>
    <property type="gene ID" value="ENSG00000176771.18"/>
</dbReference>
<dbReference type="GeneID" id="344148"/>
<dbReference type="KEGG" id="hsa:344148"/>
<dbReference type="MANE-Select" id="ENST00000409261.6">
    <property type="protein sequence ID" value="ENSP00000387128.1"/>
    <property type="RefSeq nucleotide sequence ID" value="NM_207363.3"/>
    <property type="RefSeq protein sequence ID" value="NP_997246.2"/>
</dbReference>
<dbReference type="UCSC" id="uc002ttp.3">
    <molecule id="O14513-1"/>
    <property type="organism name" value="human"/>
</dbReference>
<dbReference type="AGR" id="HGNC:29847"/>
<dbReference type="CTD" id="344148"/>
<dbReference type="DisGeNET" id="344148"/>
<dbReference type="GeneCards" id="NCKAP5"/>
<dbReference type="HGNC" id="HGNC:29847">
    <property type="gene designation" value="NCKAP5"/>
</dbReference>
<dbReference type="HPA" id="ENSG00000176771">
    <property type="expression patterns" value="Tissue enhanced (lung)"/>
</dbReference>
<dbReference type="MIM" id="608789">
    <property type="type" value="gene"/>
</dbReference>
<dbReference type="neXtProt" id="NX_O14513"/>
<dbReference type="OpenTargets" id="ENSG00000176771"/>
<dbReference type="PharmGKB" id="PA165696957"/>
<dbReference type="VEuPathDB" id="HostDB:ENSG00000176771"/>
<dbReference type="eggNOG" id="ENOG502QWN7">
    <property type="taxonomic scope" value="Eukaryota"/>
</dbReference>
<dbReference type="GeneTree" id="ENSGT00530000063607"/>
<dbReference type="HOGENOM" id="CLU_002885_0_0_1"/>
<dbReference type="InParanoid" id="O14513"/>
<dbReference type="OMA" id="RRDWAQC"/>
<dbReference type="OrthoDB" id="8930856at2759"/>
<dbReference type="PAN-GO" id="O14513">
    <property type="GO annotations" value="3 GO annotations based on evolutionary models"/>
</dbReference>
<dbReference type="PhylomeDB" id="O14513"/>
<dbReference type="TreeFam" id="TF331208"/>
<dbReference type="PathwayCommons" id="O14513"/>
<dbReference type="SignaLink" id="O14513"/>
<dbReference type="BioGRID-ORCS" id="344148">
    <property type="hits" value="10 hits in 1146 CRISPR screens"/>
</dbReference>
<dbReference type="ChiTaRS" id="NCKAP5">
    <property type="organism name" value="human"/>
</dbReference>
<dbReference type="GenomeRNAi" id="344148"/>
<dbReference type="Pharos" id="O14513">
    <property type="development level" value="Tbio"/>
</dbReference>
<dbReference type="PRO" id="PR:O14513"/>
<dbReference type="Proteomes" id="UP000005640">
    <property type="component" value="Chromosome 2"/>
</dbReference>
<dbReference type="RNAct" id="O14513">
    <property type="molecule type" value="protein"/>
</dbReference>
<dbReference type="Bgee" id="ENSG00000176771">
    <property type="expression patterns" value="Expressed in corpus callosum and 100 other cell types or tissues"/>
</dbReference>
<dbReference type="ExpressionAtlas" id="O14513">
    <property type="expression patterns" value="baseline and differential"/>
</dbReference>
<dbReference type="GO" id="GO:0035371">
    <property type="term" value="C:microtubule plus-end"/>
    <property type="evidence" value="ECO:0000318"/>
    <property type="project" value="GO_Central"/>
</dbReference>
<dbReference type="GO" id="GO:0001578">
    <property type="term" value="P:microtubule bundle formation"/>
    <property type="evidence" value="ECO:0000318"/>
    <property type="project" value="GO_Central"/>
</dbReference>
<dbReference type="GO" id="GO:0007019">
    <property type="term" value="P:microtubule depolymerization"/>
    <property type="evidence" value="ECO:0000318"/>
    <property type="project" value="GO_Central"/>
</dbReference>
<dbReference type="InterPro" id="IPR032769">
    <property type="entry name" value="NCKAP5_C"/>
</dbReference>
<dbReference type="InterPro" id="IPR026163">
    <property type="entry name" value="Nckap5l"/>
</dbReference>
<dbReference type="PANTHER" id="PTHR21740">
    <property type="entry name" value="NCK-ASSOCIATED PROTEIN 5"/>
    <property type="match status" value="1"/>
</dbReference>
<dbReference type="PANTHER" id="PTHR21740:SF0">
    <property type="entry name" value="NCK-ASSOCIATED PROTEIN 5"/>
    <property type="match status" value="1"/>
</dbReference>
<dbReference type="Pfam" id="PF15246">
    <property type="entry name" value="NCKAP5"/>
    <property type="match status" value="1"/>
</dbReference>
<protein>
    <recommendedName>
        <fullName>Nck-associated protein 5</fullName>
        <shortName>NAP-5</shortName>
    </recommendedName>
    <alternativeName>
        <fullName>Peripheral clock protein</fullName>
    </alternativeName>
</protein>
<comment type="subunit">
    <text>Interacts with the SH3-containing region of the adapter protein NCK.</text>
</comment>
<comment type="interaction">
    <interactant intactId="EBI-1752508">
        <id>O14513</id>
    </interactant>
    <interactant intactId="EBI-389883">
        <id>P16333</id>
        <label>NCK1</label>
    </interactant>
    <organismsDiffer>false</organismsDiffer>
    <experiments>2</experiments>
</comment>
<comment type="alternative products">
    <event type="alternative splicing"/>
    <isoform>
        <id>O14513-1</id>
        <name>1</name>
        <name>Peripheral clock protein 2</name>
        <name>ERIH2</name>
        <sequence type="displayed"/>
    </isoform>
    <isoform>
        <id>O14513-2</id>
        <name>2</name>
        <name>Peripheral clock protein 1</name>
        <name>ERIH1</name>
        <sequence type="described" ref="VSP_021606"/>
    </isoform>
    <isoform>
        <id>O14513-3</id>
        <name>3</name>
        <sequence type="described" ref="VSP_021601 VSP_021604 VSP_021605"/>
    </isoform>
    <isoform>
        <id>O14513-4</id>
        <name>4</name>
        <sequence type="described" ref="VSP_021602 VSP_021603"/>
    </isoform>
</comment>
<comment type="tissue specificity">
    <text>Expressed in fetal and adult brain, leukocytes and fetal fibroblasts.</text>
</comment>
<comment type="caution">
    <text evidence="6">It is uncertain whether Met-1 or Met-26 is the initiator.</text>
</comment>
<comment type="sequence caution" evidence="6">
    <conflict type="frameshift">
        <sequence resource="EMBL-CDS" id="BAA22433"/>
    </conflict>
</comment>
<comment type="sequence caution" evidence="6">
    <conflict type="erroneous initiation">
        <sequence resource="EMBL-CDS" id="BAC85920"/>
    </conflict>
</comment>
<feature type="chain" id="PRO_0000096711" description="Nck-associated protein 5">
    <location>
        <begin position="1"/>
        <end position="1909"/>
    </location>
</feature>
<feature type="region of interest" description="Disordered" evidence="2">
    <location>
        <begin position="351"/>
        <end position="370"/>
    </location>
</feature>
<feature type="region of interest" description="Disordered" evidence="2">
    <location>
        <begin position="736"/>
        <end position="819"/>
    </location>
</feature>
<feature type="region of interest" description="Disordered" evidence="2">
    <location>
        <begin position="855"/>
        <end position="997"/>
    </location>
</feature>
<feature type="region of interest" description="Disordered" evidence="2">
    <location>
        <begin position="1026"/>
        <end position="1469"/>
    </location>
</feature>
<feature type="region of interest" description="Disordered" evidence="2">
    <location>
        <begin position="1486"/>
        <end position="1509"/>
    </location>
</feature>
<feature type="region of interest" description="Disordered" evidence="2">
    <location>
        <begin position="1541"/>
        <end position="1592"/>
    </location>
</feature>
<feature type="region of interest" description="Disordered" evidence="2">
    <location>
        <begin position="1725"/>
        <end position="1750"/>
    </location>
</feature>
<feature type="region of interest" description="Disordered" evidence="2">
    <location>
        <begin position="1763"/>
        <end position="1885"/>
    </location>
</feature>
<feature type="coiled-coil region" evidence="1">
    <location>
        <begin position="71"/>
        <end position="253"/>
    </location>
</feature>
<feature type="compositionally biased region" description="Basic and acidic residues" evidence="2">
    <location>
        <begin position="736"/>
        <end position="748"/>
    </location>
</feature>
<feature type="compositionally biased region" description="Polar residues" evidence="2">
    <location>
        <begin position="753"/>
        <end position="789"/>
    </location>
</feature>
<feature type="compositionally biased region" description="Polar residues" evidence="2">
    <location>
        <begin position="950"/>
        <end position="965"/>
    </location>
</feature>
<feature type="compositionally biased region" description="Polar residues" evidence="2">
    <location>
        <begin position="981"/>
        <end position="990"/>
    </location>
</feature>
<feature type="compositionally biased region" description="Polar residues" evidence="2">
    <location>
        <begin position="1066"/>
        <end position="1084"/>
    </location>
</feature>
<feature type="compositionally biased region" description="Low complexity" evidence="2">
    <location>
        <begin position="1110"/>
        <end position="1131"/>
    </location>
</feature>
<feature type="compositionally biased region" description="Low complexity" evidence="2">
    <location>
        <begin position="1178"/>
        <end position="1187"/>
    </location>
</feature>
<feature type="compositionally biased region" description="Basic and acidic residues" evidence="2">
    <location>
        <begin position="1241"/>
        <end position="1250"/>
    </location>
</feature>
<feature type="compositionally biased region" description="Polar residues" evidence="2">
    <location>
        <begin position="1300"/>
        <end position="1325"/>
    </location>
</feature>
<feature type="compositionally biased region" description="Low complexity" evidence="2">
    <location>
        <begin position="1339"/>
        <end position="1366"/>
    </location>
</feature>
<feature type="compositionally biased region" description="Polar residues" evidence="2">
    <location>
        <begin position="1428"/>
        <end position="1446"/>
    </location>
</feature>
<feature type="compositionally biased region" description="Low complexity" evidence="2">
    <location>
        <begin position="1454"/>
        <end position="1466"/>
    </location>
</feature>
<feature type="compositionally biased region" description="Basic and acidic residues" evidence="2">
    <location>
        <begin position="1547"/>
        <end position="1560"/>
    </location>
</feature>
<feature type="compositionally biased region" description="Basic and acidic residues" evidence="2">
    <location>
        <begin position="1567"/>
        <end position="1576"/>
    </location>
</feature>
<feature type="compositionally biased region" description="Polar residues" evidence="2">
    <location>
        <begin position="1869"/>
        <end position="1878"/>
    </location>
</feature>
<feature type="splice variant" id="VSP_021601" description="In isoform 3." evidence="3">
    <location>
        <begin position="1"/>
        <end position="25"/>
    </location>
</feature>
<feature type="splice variant" id="VSP_021602" description="In isoform 4." evidence="4">
    <original>MEET</original>
    <variation>RRKM</variation>
    <location>
        <begin position="115"/>
        <end position="118"/>
    </location>
</feature>
<feature type="splice variant" id="VSP_021603" description="In isoform 4." evidence="4">
    <location>
        <begin position="119"/>
        <end position="1909"/>
    </location>
</feature>
<feature type="splice variant" id="VSP_021604" description="In isoform 3." evidence="3">
    <original>AENSALALEN</original>
    <variation>KHGWNWRPLS</variation>
    <location>
        <begin position="194"/>
        <end position="203"/>
    </location>
</feature>
<feature type="splice variant" id="VSP_021605" description="In isoform 3." evidence="3">
    <location>
        <begin position="204"/>
        <end position="1909"/>
    </location>
</feature>
<feature type="splice variant" id="VSP_021606" description="In isoform 2." evidence="5">
    <location>
        <begin position="365"/>
        <end position="1683"/>
    </location>
</feature>
<feature type="sequence variant" id="VAR_061686" description="In dbSNP:rs58963837.">
    <original>R</original>
    <variation>Q</variation>
    <location>
        <position position="250"/>
    </location>
</feature>
<feature type="sequence variant" id="VAR_051220" description="In dbSNP:rs17325719.">
    <original>S</original>
    <variation>T</variation>
    <location>
        <position position="600"/>
    </location>
</feature>
<feature type="sequence variant" id="VAR_051221" description="In dbSNP:rs12611515.">
    <original>V</original>
    <variation>I</variation>
    <location>
        <position position="937"/>
    </location>
</feature>
<feature type="sequence variant" id="VAR_051222" description="In dbSNP:rs12691830.">
    <original>I</original>
    <variation>T</variation>
    <location>
        <position position="977"/>
    </location>
</feature>
<feature type="sequence variant" id="VAR_051223" description="In dbSNP:rs16841277.">
    <original>N</original>
    <variation>Y</variation>
    <location>
        <position position="1093"/>
    </location>
</feature>
<feature type="sequence variant" id="VAR_051224" description="In dbSNP:rs13016342.">
    <original>P</original>
    <variation>Q</variation>
    <location>
        <position position="1260"/>
    </location>
</feature>
<feature type="sequence variant" id="VAR_051225" description="In dbSNP:rs2278752.">
    <original>V</original>
    <variation>A</variation>
    <location>
        <position position="1403"/>
    </location>
</feature>
<feature type="sequence conflict" description="In Ref. 5; BAA22433." evidence="6" ref="5">
    <original>PP</original>
    <variation>QS</variation>
    <location>
        <begin position="931"/>
        <end position="932"/>
    </location>
</feature>
<feature type="sequence conflict" description="In Ref. 5; BAA22433." evidence="6" ref="5">
    <original>S</original>
    <variation>P</variation>
    <location>
        <position position="948"/>
    </location>
</feature>
<feature type="sequence conflict" description="In Ref. 5; BAA22433." evidence="6" ref="5">
    <original>T</original>
    <variation>S</variation>
    <location>
        <position position="1018"/>
    </location>
</feature>
<organism>
    <name type="scientific">Homo sapiens</name>
    <name type="common">Human</name>
    <dbReference type="NCBI Taxonomy" id="9606"/>
    <lineage>
        <taxon>Eukaryota</taxon>
        <taxon>Metazoa</taxon>
        <taxon>Chordata</taxon>
        <taxon>Craniata</taxon>
        <taxon>Vertebrata</taxon>
        <taxon>Euteleostomi</taxon>
        <taxon>Mammalia</taxon>
        <taxon>Eutheria</taxon>
        <taxon>Euarchontoglires</taxon>
        <taxon>Primates</taxon>
        <taxon>Haplorrhini</taxon>
        <taxon>Catarrhini</taxon>
        <taxon>Hominidae</taxon>
        <taxon>Homo</taxon>
    </lineage>
</organism>
<reference key="1">
    <citation type="journal article" date="2004" name="Nat. Genet.">
        <title>Complete sequencing and characterization of 21,243 full-length human cDNAs.</title>
        <authorList>
            <person name="Ota T."/>
            <person name="Suzuki Y."/>
            <person name="Nishikawa T."/>
            <person name="Otsuki T."/>
            <person name="Sugiyama T."/>
            <person name="Irie R."/>
            <person name="Wakamatsu A."/>
            <person name="Hayashi K."/>
            <person name="Sato H."/>
            <person name="Nagai K."/>
            <person name="Kimura K."/>
            <person name="Makita H."/>
            <person name="Sekine M."/>
            <person name="Obayashi M."/>
            <person name="Nishi T."/>
            <person name="Shibahara T."/>
            <person name="Tanaka T."/>
            <person name="Ishii S."/>
            <person name="Yamamoto J."/>
            <person name="Saito K."/>
            <person name="Kawai Y."/>
            <person name="Isono Y."/>
            <person name="Nakamura Y."/>
            <person name="Nagahari K."/>
            <person name="Murakami K."/>
            <person name="Yasuda T."/>
            <person name="Iwayanagi T."/>
            <person name="Wagatsuma M."/>
            <person name="Shiratori A."/>
            <person name="Sudo H."/>
            <person name="Hosoiri T."/>
            <person name="Kaku Y."/>
            <person name="Kodaira H."/>
            <person name="Kondo H."/>
            <person name="Sugawara M."/>
            <person name="Takahashi M."/>
            <person name="Kanda K."/>
            <person name="Yokoi T."/>
            <person name="Furuya T."/>
            <person name="Kikkawa E."/>
            <person name="Omura Y."/>
            <person name="Abe K."/>
            <person name="Kamihara K."/>
            <person name="Katsuta N."/>
            <person name="Sato K."/>
            <person name="Tanikawa M."/>
            <person name="Yamazaki M."/>
            <person name="Ninomiya K."/>
            <person name="Ishibashi T."/>
            <person name="Yamashita H."/>
            <person name="Murakawa K."/>
            <person name="Fujimori K."/>
            <person name="Tanai H."/>
            <person name="Kimata M."/>
            <person name="Watanabe M."/>
            <person name="Hiraoka S."/>
            <person name="Chiba Y."/>
            <person name="Ishida S."/>
            <person name="Ono Y."/>
            <person name="Takiguchi S."/>
            <person name="Watanabe S."/>
            <person name="Yosida M."/>
            <person name="Hotuta T."/>
            <person name="Kusano J."/>
            <person name="Kanehori K."/>
            <person name="Takahashi-Fujii A."/>
            <person name="Hara H."/>
            <person name="Tanase T.-O."/>
            <person name="Nomura Y."/>
            <person name="Togiya S."/>
            <person name="Komai F."/>
            <person name="Hara R."/>
            <person name="Takeuchi K."/>
            <person name="Arita M."/>
            <person name="Imose N."/>
            <person name="Musashino K."/>
            <person name="Yuuki H."/>
            <person name="Oshima A."/>
            <person name="Sasaki N."/>
            <person name="Aotsuka S."/>
            <person name="Yoshikawa Y."/>
            <person name="Matsunawa H."/>
            <person name="Ichihara T."/>
            <person name="Shiohata N."/>
            <person name="Sano S."/>
            <person name="Moriya S."/>
            <person name="Momiyama H."/>
            <person name="Satoh N."/>
            <person name="Takami S."/>
            <person name="Terashima Y."/>
            <person name="Suzuki O."/>
            <person name="Nakagawa S."/>
            <person name="Senoh A."/>
            <person name="Mizoguchi H."/>
            <person name="Goto Y."/>
            <person name="Shimizu F."/>
            <person name="Wakebe H."/>
            <person name="Hishigaki H."/>
            <person name="Watanabe T."/>
            <person name="Sugiyama A."/>
            <person name="Takemoto M."/>
            <person name="Kawakami B."/>
            <person name="Yamazaki M."/>
            <person name="Watanabe K."/>
            <person name="Kumagai A."/>
            <person name="Itakura S."/>
            <person name="Fukuzumi Y."/>
            <person name="Fujimori Y."/>
            <person name="Komiyama M."/>
            <person name="Tashiro H."/>
            <person name="Tanigami A."/>
            <person name="Fujiwara T."/>
            <person name="Ono T."/>
            <person name="Yamada K."/>
            <person name="Fujii Y."/>
            <person name="Ozaki K."/>
            <person name="Hirao M."/>
            <person name="Ohmori Y."/>
            <person name="Kawabata A."/>
            <person name="Hikiji T."/>
            <person name="Kobatake N."/>
            <person name="Inagaki H."/>
            <person name="Ikema Y."/>
            <person name="Okamoto S."/>
            <person name="Okitani R."/>
            <person name="Kawakami T."/>
            <person name="Noguchi S."/>
            <person name="Itoh T."/>
            <person name="Shigeta K."/>
            <person name="Senba T."/>
            <person name="Matsumura K."/>
            <person name="Nakajima Y."/>
            <person name="Mizuno T."/>
            <person name="Morinaga M."/>
            <person name="Sasaki M."/>
            <person name="Togashi T."/>
            <person name="Oyama M."/>
            <person name="Hata H."/>
            <person name="Watanabe M."/>
            <person name="Komatsu T."/>
            <person name="Mizushima-Sugano J."/>
            <person name="Satoh T."/>
            <person name="Shirai Y."/>
            <person name="Takahashi Y."/>
            <person name="Nakagawa K."/>
            <person name="Okumura K."/>
            <person name="Nagase T."/>
            <person name="Nomura N."/>
            <person name="Kikuchi H."/>
            <person name="Masuho Y."/>
            <person name="Yamashita R."/>
            <person name="Nakai K."/>
            <person name="Yada T."/>
            <person name="Nakamura Y."/>
            <person name="Ohara O."/>
            <person name="Isogai T."/>
            <person name="Sugano S."/>
        </authorList>
    </citation>
    <scope>NUCLEOTIDE SEQUENCE [LARGE SCALE MRNA] (ISOFORM 3)</scope>
    <scope>NUCLEOTIDE SEQUENCE [LARGE SCALE MRNA] OF 1586-1909 (ISOFORM 1)</scope>
    <source>
        <tissue>Amygdala</tissue>
        <tissue>Teratocarcinoma</tissue>
    </source>
</reference>
<reference key="2">
    <citation type="journal article" date="2005" name="Nature">
        <title>Generation and annotation of the DNA sequences of human chromosomes 2 and 4.</title>
        <authorList>
            <person name="Hillier L.W."/>
            <person name="Graves T.A."/>
            <person name="Fulton R.S."/>
            <person name="Fulton L.A."/>
            <person name="Pepin K.H."/>
            <person name="Minx P."/>
            <person name="Wagner-McPherson C."/>
            <person name="Layman D."/>
            <person name="Wylie K."/>
            <person name="Sekhon M."/>
            <person name="Becker M.C."/>
            <person name="Fewell G.A."/>
            <person name="Delehaunty K.D."/>
            <person name="Miner T.L."/>
            <person name="Nash W.E."/>
            <person name="Kremitzki C."/>
            <person name="Oddy L."/>
            <person name="Du H."/>
            <person name="Sun H."/>
            <person name="Bradshaw-Cordum H."/>
            <person name="Ali J."/>
            <person name="Carter J."/>
            <person name="Cordes M."/>
            <person name="Harris A."/>
            <person name="Isak A."/>
            <person name="van Brunt A."/>
            <person name="Nguyen C."/>
            <person name="Du F."/>
            <person name="Courtney L."/>
            <person name="Kalicki J."/>
            <person name="Ozersky P."/>
            <person name="Abbott S."/>
            <person name="Armstrong J."/>
            <person name="Belter E.A."/>
            <person name="Caruso L."/>
            <person name="Cedroni M."/>
            <person name="Cotton M."/>
            <person name="Davidson T."/>
            <person name="Desai A."/>
            <person name="Elliott G."/>
            <person name="Erb T."/>
            <person name="Fronick C."/>
            <person name="Gaige T."/>
            <person name="Haakenson W."/>
            <person name="Haglund K."/>
            <person name="Holmes A."/>
            <person name="Harkins R."/>
            <person name="Kim K."/>
            <person name="Kruchowski S.S."/>
            <person name="Strong C.M."/>
            <person name="Grewal N."/>
            <person name="Goyea E."/>
            <person name="Hou S."/>
            <person name="Levy A."/>
            <person name="Martinka S."/>
            <person name="Mead K."/>
            <person name="McLellan M.D."/>
            <person name="Meyer R."/>
            <person name="Randall-Maher J."/>
            <person name="Tomlinson C."/>
            <person name="Dauphin-Kohlberg S."/>
            <person name="Kozlowicz-Reilly A."/>
            <person name="Shah N."/>
            <person name="Swearengen-Shahid S."/>
            <person name="Snider J."/>
            <person name="Strong J.T."/>
            <person name="Thompson J."/>
            <person name="Yoakum M."/>
            <person name="Leonard S."/>
            <person name="Pearman C."/>
            <person name="Trani L."/>
            <person name="Radionenko M."/>
            <person name="Waligorski J.E."/>
            <person name="Wang C."/>
            <person name="Rock S.M."/>
            <person name="Tin-Wollam A.-M."/>
            <person name="Maupin R."/>
            <person name="Latreille P."/>
            <person name="Wendl M.C."/>
            <person name="Yang S.-P."/>
            <person name="Pohl C."/>
            <person name="Wallis J.W."/>
            <person name="Spieth J."/>
            <person name="Bieri T.A."/>
            <person name="Berkowicz N."/>
            <person name="Nelson J.O."/>
            <person name="Osborne J."/>
            <person name="Ding L."/>
            <person name="Meyer R."/>
            <person name="Sabo A."/>
            <person name="Shotland Y."/>
            <person name="Sinha P."/>
            <person name="Wohldmann P.E."/>
            <person name="Cook L.L."/>
            <person name="Hickenbotham M.T."/>
            <person name="Eldred J."/>
            <person name="Williams D."/>
            <person name="Jones T.A."/>
            <person name="She X."/>
            <person name="Ciccarelli F.D."/>
            <person name="Izaurralde E."/>
            <person name="Taylor J."/>
            <person name="Schmutz J."/>
            <person name="Myers R.M."/>
            <person name="Cox D.R."/>
            <person name="Huang X."/>
            <person name="McPherson J.D."/>
            <person name="Mardis E.R."/>
            <person name="Clifton S.W."/>
            <person name="Warren W.C."/>
            <person name="Chinwalla A.T."/>
            <person name="Eddy S.R."/>
            <person name="Marra M.A."/>
            <person name="Ovcharenko I."/>
            <person name="Furey T.S."/>
            <person name="Miller W."/>
            <person name="Eichler E.E."/>
            <person name="Bork P."/>
            <person name="Suyama M."/>
            <person name="Torrents D."/>
            <person name="Waterston R.H."/>
            <person name="Wilson R.K."/>
        </authorList>
    </citation>
    <scope>NUCLEOTIDE SEQUENCE [LARGE SCALE GENOMIC DNA]</scope>
</reference>
<reference key="3">
    <citation type="journal article" date="2004" name="Genome Res.">
        <title>The status, quality, and expansion of the NIH full-length cDNA project: the Mammalian Gene Collection (MGC).</title>
        <authorList>
            <consortium name="The MGC Project Team"/>
        </authorList>
    </citation>
    <scope>NUCLEOTIDE SEQUENCE [LARGE SCALE MRNA] OF 6-1909 (ISOFORM 4)</scope>
    <source>
        <tissue>Testis</tissue>
    </source>
</reference>
<reference key="4">
    <citation type="submission" date="2005-02" db="EMBL/GenBank/DDBJ databases">
        <authorList>
            <person name="Hisa T."/>
        </authorList>
    </citation>
    <scope>NUCLEOTIDE SEQUENCE [MRNA] OF 69-1909 (ISOFORMS 1 AND 2)</scope>
</reference>
<reference key="5">
    <citation type="journal article" date="1997" name="Biochem. Biophys. Res. Commun.">
        <title>A novel ligand for an SH3 domain of the adaptor protein Nck bears an SH2 domain and nuclear signaling motifs.</title>
        <authorList>
            <person name="Matuoka K."/>
            <person name="Miki H."/>
            <person name="Takahashi K."/>
            <person name="Takenawa T."/>
        </authorList>
    </citation>
    <scope>NUCLEOTIDE SEQUENCE [MRNA] OF 661-1077 (ISOFORM 1)</scope>
    <source>
        <tissue>Brain</tissue>
    </source>
</reference>
<reference key="6">
    <citation type="journal article" date="2009" name="Sci. Signal.">
        <title>Quantitative phosphoproteomic analysis of T cell receptor signaling reveals system-wide modulation of protein-protein interactions.</title>
        <authorList>
            <person name="Mayya V."/>
            <person name="Lundgren D.H."/>
            <person name="Hwang S.-I."/>
            <person name="Rezaul K."/>
            <person name="Wu L."/>
            <person name="Eng J.K."/>
            <person name="Rodionov V."/>
            <person name="Han D.K."/>
        </authorList>
    </citation>
    <scope>IDENTIFICATION BY MASS SPECTROMETRY [LARGE SCALE ANALYSIS]</scope>
    <source>
        <tissue>Leukemic T-cell</tissue>
    </source>
</reference>
<reference key="7">
    <citation type="journal article" date="2013" name="J. Proteome Res.">
        <title>Toward a comprehensive characterization of a human cancer cell phosphoproteome.</title>
        <authorList>
            <person name="Zhou H."/>
            <person name="Di Palma S."/>
            <person name="Preisinger C."/>
            <person name="Peng M."/>
            <person name="Polat A.N."/>
            <person name="Heck A.J."/>
            <person name="Mohammed S."/>
        </authorList>
    </citation>
    <scope>IDENTIFICATION BY MASS SPECTROMETRY [LARGE SCALE ANALYSIS]</scope>
    <source>
        <tissue>Cervix carcinoma</tissue>
    </source>
</reference>
<evidence type="ECO:0000255" key="1"/>
<evidence type="ECO:0000256" key="2">
    <source>
        <dbReference type="SAM" id="MobiDB-lite"/>
    </source>
</evidence>
<evidence type="ECO:0000303" key="3">
    <source>
    </source>
</evidence>
<evidence type="ECO:0000303" key="4">
    <source>
    </source>
</evidence>
<evidence type="ECO:0000303" key="5">
    <source ref="4"/>
</evidence>
<evidence type="ECO:0000305" key="6"/>
<name>NCKP5_HUMAN</name>
<proteinExistence type="evidence at protein level"/>
<gene>
    <name type="primary">NCKAP5</name>
    <name type="synonym">ERIH</name>
    <name type="synonym">NAP5</name>
</gene>
<keyword id="KW-0025">Alternative splicing</keyword>
<keyword id="KW-0175">Coiled coil</keyword>
<keyword id="KW-1267">Proteomics identification</keyword>
<keyword id="KW-1185">Reference proteome</keyword>
<accession>O14513</accession>
<accession>B8ZZL0</accession>
<accession>Q29SS9</accession>
<accession>Q29ST0</accession>
<accession>Q2NL90</accession>
<accession>Q6ZVE2</accession>
<accession>Q8NAS3</accession>